<organism>
    <name type="scientific">Roseiflexus castenholzii (strain DSM 13941 / HLO8)</name>
    <dbReference type="NCBI Taxonomy" id="383372"/>
    <lineage>
        <taxon>Bacteria</taxon>
        <taxon>Bacillati</taxon>
        <taxon>Chloroflexota</taxon>
        <taxon>Chloroflexia</taxon>
        <taxon>Chloroflexales</taxon>
        <taxon>Roseiflexineae</taxon>
        <taxon>Roseiflexaceae</taxon>
        <taxon>Roseiflexus</taxon>
    </lineage>
</organism>
<protein>
    <recommendedName>
        <fullName evidence="1">3-isopropylmalate dehydratase small subunit</fullName>
        <ecNumber evidence="1">4.2.1.33</ecNumber>
    </recommendedName>
    <alternativeName>
        <fullName evidence="1">Alpha-IPM isomerase</fullName>
        <shortName evidence="1">IPMI</shortName>
    </alternativeName>
    <alternativeName>
        <fullName evidence="1">Isopropylmalate isomerase</fullName>
    </alternativeName>
</protein>
<reference key="1">
    <citation type="submission" date="2007-08" db="EMBL/GenBank/DDBJ databases">
        <title>Complete sequence of Roseiflexus castenholzii DSM 13941.</title>
        <authorList>
            <consortium name="US DOE Joint Genome Institute"/>
            <person name="Copeland A."/>
            <person name="Lucas S."/>
            <person name="Lapidus A."/>
            <person name="Barry K."/>
            <person name="Glavina del Rio T."/>
            <person name="Dalin E."/>
            <person name="Tice H."/>
            <person name="Pitluck S."/>
            <person name="Thompson L.S."/>
            <person name="Brettin T."/>
            <person name="Bruce D."/>
            <person name="Detter J.C."/>
            <person name="Han C."/>
            <person name="Tapia R."/>
            <person name="Schmutz J."/>
            <person name="Larimer F."/>
            <person name="Land M."/>
            <person name="Hauser L."/>
            <person name="Kyrpides N."/>
            <person name="Mikhailova N."/>
            <person name="Bryant D.A."/>
            <person name="Hanada S."/>
            <person name="Tsukatani Y."/>
            <person name="Richardson P."/>
        </authorList>
    </citation>
    <scope>NUCLEOTIDE SEQUENCE [LARGE SCALE GENOMIC DNA]</scope>
    <source>
        <strain>DSM 13941 / HLO8</strain>
    </source>
</reference>
<dbReference type="EC" id="4.2.1.33" evidence="1"/>
<dbReference type="EMBL" id="CP000804">
    <property type="protein sequence ID" value="ABU57641.1"/>
    <property type="molecule type" value="Genomic_DNA"/>
</dbReference>
<dbReference type="RefSeq" id="WP_012120069.1">
    <property type="nucleotide sequence ID" value="NC_009767.1"/>
</dbReference>
<dbReference type="SMR" id="A7NJH1"/>
<dbReference type="STRING" id="383372.Rcas_1548"/>
<dbReference type="KEGG" id="rca:Rcas_1548"/>
<dbReference type="eggNOG" id="COG0066">
    <property type="taxonomic scope" value="Bacteria"/>
</dbReference>
<dbReference type="HOGENOM" id="CLU_081378_0_3_0"/>
<dbReference type="OrthoDB" id="9777465at2"/>
<dbReference type="UniPathway" id="UPA00048">
    <property type="reaction ID" value="UER00071"/>
</dbReference>
<dbReference type="Proteomes" id="UP000000263">
    <property type="component" value="Chromosome"/>
</dbReference>
<dbReference type="GO" id="GO:0009316">
    <property type="term" value="C:3-isopropylmalate dehydratase complex"/>
    <property type="evidence" value="ECO:0007669"/>
    <property type="project" value="InterPro"/>
</dbReference>
<dbReference type="GO" id="GO:0003861">
    <property type="term" value="F:3-isopropylmalate dehydratase activity"/>
    <property type="evidence" value="ECO:0007669"/>
    <property type="project" value="UniProtKB-UniRule"/>
</dbReference>
<dbReference type="GO" id="GO:0009098">
    <property type="term" value="P:L-leucine biosynthetic process"/>
    <property type="evidence" value="ECO:0007669"/>
    <property type="project" value="UniProtKB-UniRule"/>
</dbReference>
<dbReference type="CDD" id="cd01577">
    <property type="entry name" value="IPMI_Swivel"/>
    <property type="match status" value="1"/>
</dbReference>
<dbReference type="FunFam" id="3.20.19.10:FF:000003">
    <property type="entry name" value="3-isopropylmalate dehydratase small subunit"/>
    <property type="match status" value="1"/>
</dbReference>
<dbReference type="Gene3D" id="3.20.19.10">
    <property type="entry name" value="Aconitase, domain 4"/>
    <property type="match status" value="1"/>
</dbReference>
<dbReference type="HAMAP" id="MF_01031">
    <property type="entry name" value="LeuD_type1"/>
    <property type="match status" value="1"/>
</dbReference>
<dbReference type="InterPro" id="IPR004431">
    <property type="entry name" value="3-IsopropMal_deHydase_ssu"/>
</dbReference>
<dbReference type="InterPro" id="IPR015928">
    <property type="entry name" value="Aconitase/3IPM_dehydase_swvl"/>
</dbReference>
<dbReference type="InterPro" id="IPR000573">
    <property type="entry name" value="AconitaseA/IPMdHydase_ssu_swvl"/>
</dbReference>
<dbReference type="InterPro" id="IPR033940">
    <property type="entry name" value="IPMI_Swivel"/>
</dbReference>
<dbReference type="InterPro" id="IPR050075">
    <property type="entry name" value="LeuD"/>
</dbReference>
<dbReference type="NCBIfam" id="TIGR00171">
    <property type="entry name" value="leuD"/>
    <property type="match status" value="1"/>
</dbReference>
<dbReference type="NCBIfam" id="NF002458">
    <property type="entry name" value="PRK01641.1"/>
    <property type="match status" value="1"/>
</dbReference>
<dbReference type="PANTHER" id="PTHR43345:SF5">
    <property type="entry name" value="3-ISOPROPYLMALATE DEHYDRATASE SMALL SUBUNIT"/>
    <property type="match status" value="1"/>
</dbReference>
<dbReference type="PANTHER" id="PTHR43345">
    <property type="entry name" value="3-ISOPROPYLMALATE DEHYDRATASE SMALL SUBUNIT 2-RELATED-RELATED"/>
    <property type="match status" value="1"/>
</dbReference>
<dbReference type="Pfam" id="PF00694">
    <property type="entry name" value="Aconitase_C"/>
    <property type="match status" value="1"/>
</dbReference>
<dbReference type="SUPFAM" id="SSF52016">
    <property type="entry name" value="LeuD/IlvD-like"/>
    <property type="match status" value="1"/>
</dbReference>
<keyword id="KW-0028">Amino-acid biosynthesis</keyword>
<keyword id="KW-0100">Branched-chain amino acid biosynthesis</keyword>
<keyword id="KW-0432">Leucine biosynthesis</keyword>
<keyword id="KW-0456">Lyase</keyword>
<keyword id="KW-1185">Reference proteome</keyword>
<gene>
    <name evidence="1" type="primary">leuD</name>
    <name type="ordered locus">Rcas_1548</name>
</gene>
<proteinExistence type="inferred from homology"/>
<accession>A7NJH1</accession>
<comment type="function">
    <text evidence="1">Catalyzes the isomerization between 2-isopropylmalate and 3-isopropylmalate, via the formation of 2-isopropylmaleate.</text>
</comment>
<comment type="catalytic activity">
    <reaction evidence="1">
        <text>(2R,3S)-3-isopropylmalate = (2S)-2-isopropylmalate</text>
        <dbReference type="Rhea" id="RHEA:32287"/>
        <dbReference type="ChEBI" id="CHEBI:1178"/>
        <dbReference type="ChEBI" id="CHEBI:35121"/>
        <dbReference type="EC" id="4.2.1.33"/>
    </reaction>
</comment>
<comment type="pathway">
    <text evidence="1">Amino-acid biosynthesis; L-leucine biosynthesis; L-leucine from 3-methyl-2-oxobutanoate: step 2/4.</text>
</comment>
<comment type="subunit">
    <text evidence="1">Heterodimer of LeuC and LeuD.</text>
</comment>
<comment type="similarity">
    <text evidence="1">Belongs to the LeuD family. LeuD type 1 subfamily.</text>
</comment>
<evidence type="ECO:0000255" key="1">
    <source>
        <dbReference type="HAMAP-Rule" id="MF_01031"/>
    </source>
</evidence>
<sequence>MHPISIITGRIVALPAHDIDTDQIIPARYLKVTDKSGLAEGLFYAWRFDAEGKPNPDFVLNRPEAQGATILVAGRNFGCGSSREHAPWALQGYGFKAVISPSFADIFRNNALKNGLLTVQTDEETWQQLVSLFEEDPTTEVIIDLATQTVTLPDGRQARFPIDPFTKHCLLQGIDQMGFLLNEEDAISAYESAHPPRVVTTARS</sequence>
<name>LEUD_ROSCS</name>
<feature type="chain" id="PRO_1000084261" description="3-isopropylmalate dehydratase small subunit">
    <location>
        <begin position="1"/>
        <end position="204"/>
    </location>
</feature>